<name>GA45A_RAT</name>
<comment type="function">
    <text evidence="1">Might affect PCNA interaction with some CDK (cell division protein kinase) complexes; stimulates DNA excision repair in vitro and inhibits entry of cells into S phase. In T-cells, functions as a regulator of p38 MAPKs by inhibiting p88 phosphorylation and activity (By similarity).</text>
</comment>
<comment type="subunit">
    <text evidence="1">Interacts with AURKA, PCNA, GADD45GIP1 and MAPK14.</text>
</comment>
<comment type="subcellular location">
    <subcellularLocation>
        <location evidence="1">Nucleus</location>
    </subcellularLocation>
</comment>
<comment type="induction">
    <text>By various types of DNA damage and growth arrest.</text>
</comment>
<comment type="similarity">
    <text evidence="3">Belongs to the GADD45 family.</text>
</comment>
<organism>
    <name type="scientific">Rattus norvegicus</name>
    <name type="common">Rat</name>
    <dbReference type="NCBI Taxonomy" id="10116"/>
    <lineage>
        <taxon>Eukaryota</taxon>
        <taxon>Metazoa</taxon>
        <taxon>Chordata</taxon>
        <taxon>Craniata</taxon>
        <taxon>Vertebrata</taxon>
        <taxon>Euteleostomi</taxon>
        <taxon>Mammalia</taxon>
        <taxon>Eutheria</taxon>
        <taxon>Euarchontoglires</taxon>
        <taxon>Glires</taxon>
        <taxon>Rodentia</taxon>
        <taxon>Myomorpha</taxon>
        <taxon>Muroidea</taxon>
        <taxon>Muridae</taxon>
        <taxon>Murinae</taxon>
        <taxon>Rattus</taxon>
    </lineage>
</organism>
<proteinExistence type="evidence at transcript level"/>
<dbReference type="EMBL" id="L32591">
    <property type="protein sequence ID" value="AAA96332.1"/>
    <property type="molecule type" value="mRNA"/>
</dbReference>
<dbReference type="EMBL" id="L39010">
    <property type="protein sequence ID" value="AAB02030.1"/>
    <property type="molecule type" value="Genomic_DNA"/>
</dbReference>
<dbReference type="PIR" id="S68690">
    <property type="entry name" value="S68690"/>
</dbReference>
<dbReference type="SMR" id="P48317"/>
<dbReference type="FunCoup" id="P48317">
    <property type="interactions" value="435"/>
</dbReference>
<dbReference type="STRING" id="10116.ENSRNOP00000007698"/>
<dbReference type="PhosphoSitePlus" id="P48317"/>
<dbReference type="PaxDb" id="10116-ENSRNOP00000007698"/>
<dbReference type="UCSC" id="RGD:2654">
    <property type="organism name" value="rat"/>
</dbReference>
<dbReference type="AGR" id="RGD:2654"/>
<dbReference type="RGD" id="2654">
    <property type="gene designation" value="Gadd45a"/>
</dbReference>
<dbReference type="eggNOG" id="ENOG502RY8P">
    <property type="taxonomic scope" value="Eukaryota"/>
</dbReference>
<dbReference type="InParanoid" id="P48317"/>
<dbReference type="PhylomeDB" id="P48317"/>
<dbReference type="Reactome" id="R-RNO-6804114">
    <property type="pathway name" value="TP53 Regulates Transcription of Genes Involved in G2 Cell Cycle Arrest"/>
</dbReference>
<dbReference type="PRO" id="PR:P48317"/>
<dbReference type="Proteomes" id="UP000002494">
    <property type="component" value="Unplaced"/>
</dbReference>
<dbReference type="GO" id="GO:0005737">
    <property type="term" value="C:cytoplasm"/>
    <property type="evidence" value="ECO:0000266"/>
    <property type="project" value="RGD"/>
</dbReference>
<dbReference type="GO" id="GO:0005634">
    <property type="term" value="C:nucleus"/>
    <property type="evidence" value="ECO:0000266"/>
    <property type="project" value="RGD"/>
</dbReference>
<dbReference type="GO" id="GO:0019900">
    <property type="term" value="F:kinase binding"/>
    <property type="evidence" value="ECO:0000266"/>
    <property type="project" value="RGD"/>
</dbReference>
<dbReference type="GO" id="GO:1990841">
    <property type="term" value="F:promoter-specific chromatin binding"/>
    <property type="evidence" value="ECO:0000266"/>
    <property type="project" value="RGD"/>
</dbReference>
<dbReference type="GO" id="GO:0046982">
    <property type="term" value="F:protein heterodimerization activity"/>
    <property type="evidence" value="ECO:0000266"/>
    <property type="project" value="RGD"/>
</dbReference>
<dbReference type="GO" id="GO:0042803">
    <property type="term" value="F:protein homodimerization activity"/>
    <property type="evidence" value="ECO:0000266"/>
    <property type="project" value="RGD"/>
</dbReference>
<dbReference type="GO" id="GO:0071479">
    <property type="term" value="P:cellular response to ionizing radiation"/>
    <property type="evidence" value="ECO:0000266"/>
    <property type="project" value="RGD"/>
</dbReference>
<dbReference type="GO" id="GO:0071260">
    <property type="term" value="P:cellular response to mechanical stimulus"/>
    <property type="evidence" value="ECO:0000266"/>
    <property type="project" value="RGD"/>
</dbReference>
<dbReference type="GO" id="GO:0007098">
    <property type="term" value="P:centrosome cycle"/>
    <property type="evidence" value="ECO:0000266"/>
    <property type="project" value="RGD"/>
</dbReference>
<dbReference type="GO" id="GO:0006974">
    <property type="term" value="P:DNA damage response"/>
    <property type="evidence" value="ECO:0000304"/>
    <property type="project" value="RGD"/>
</dbReference>
<dbReference type="GO" id="GO:0000086">
    <property type="term" value="P:G2/M transition of mitotic cell cycle"/>
    <property type="evidence" value="ECO:0000270"/>
    <property type="project" value="RGD"/>
</dbReference>
<dbReference type="GO" id="GO:0016525">
    <property type="term" value="P:negative regulation of angiogenesis"/>
    <property type="evidence" value="ECO:0000266"/>
    <property type="project" value="RGD"/>
</dbReference>
<dbReference type="GO" id="GO:0043537">
    <property type="term" value="P:negative regulation of blood vessel endothelial cell migration"/>
    <property type="evidence" value="ECO:0000266"/>
    <property type="project" value="RGD"/>
</dbReference>
<dbReference type="GO" id="GO:0000122">
    <property type="term" value="P:negative regulation of transcription by RNA polymerase II"/>
    <property type="evidence" value="ECO:0000266"/>
    <property type="project" value="RGD"/>
</dbReference>
<dbReference type="GO" id="GO:0043065">
    <property type="term" value="P:positive regulation of apoptotic process"/>
    <property type="evidence" value="ECO:0000266"/>
    <property type="project" value="RGD"/>
</dbReference>
<dbReference type="GO" id="GO:0046330">
    <property type="term" value="P:positive regulation of JNK cascade"/>
    <property type="evidence" value="ECO:0000266"/>
    <property type="project" value="RGD"/>
</dbReference>
<dbReference type="GO" id="GO:1900745">
    <property type="term" value="P:positive regulation of p38MAPK cascade"/>
    <property type="evidence" value="ECO:0000266"/>
    <property type="project" value="RGD"/>
</dbReference>
<dbReference type="GO" id="GO:2000379">
    <property type="term" value="P:positive regulation of reactive oxygen species metabolic process"/>
    <property type="evidence" value="ECO:0000266"/>
    <property type="project" value="RGD"/>
</dbReference>
<dbReference type="GO" id="GO:0051726">
    <property type="term" value="P:regulation of cell cycle"/>
    <property type="evidence" value="ECO:0000266"/>
    <property type="project" value="RGD"/>
</dbReference>
<dbReference type="GO" id="GO:0042770">
    <property type="term" value="P:signal transduction in response to DNA damage"/>
    <property type="evidence" value="ECO:0000266"/>
    <property type="project" value="RGD"/>
</dbReference>
<dbReference type="FunFam" id="3.30.1330.30:FF:000012">
    <property type="entry name" value="growth arrest and DNA damage-inducible protein GADD45 alpha"/>
    <property type="match status" value="1"/>
</dbReference>
<dbReference type="Gene3D" id="3.30.1330.30">
    <property type="match status" value="1"/>
</dbReference>
<dbReference type="InterPro" id="IPR024824">
    <property type="entry name" value="GADD45"/>
</dbReference>
<dbReference type="InterPro" id="IPR029064">
    <property type="entry name" value="Ribosomal_eL30-like_sf"/>
</dbReference>
<dbReference type="InterPro" id="IPR004038">
    <property type="entry name" value="Ribosomal_eL8/eL30/eS12/Gad45"/>
</dbReference>
<dbReference type="PANTHER" id="PTHR10411">
    <property type="entry name" value="GROWTH ARREST AND DNA DAMAGE-INDUCIBLE PROTEIN GADD45"/>
    <property type="match status" value="1"/>
</dbReference>
<dbReference type="PANTHER" id="PTHR10411:SF3">
    <property type="entry name" value="GROWTH ARREST AND DNA DAMAGE-INDUCIBLE PROTEIN GADD45 ALPHA"/>
    <property type="match status" value="1"/>
</dbReference>
<dbReference type="Pfam" id="PF01248">
    <property type="entry name" value="Ribosomal_L7Ae"/>
    <property type="match status" value="1"/>
</dbReference>
<dbReference type="SUPFAM" id="SSF55315">
    <property type="entry name" value="L30e-like"/>
    <property type="match status" value="1"/>
</dbReference>
<reference key="1">
    <citation type="journal article" date="1994" name="Gene">
        <title>Cloning of the rat Gadd45 cDNA and its mRNA expression in the brain.</title>
        <authorList>
            <person name="Yoshida T."/>
            <person name="Schneider E.L."/>
            <person name="Mori N."/>
        </authorList>
    </citation>
    <scope>NUCLEOTIDE SEQUENCE [MRNA]</scope>
    <source>
        <strain>Wistar</strain>
        <tissue>Brain</tissue>
    </source>
</reference>
<reference key="2">
    <citation type="journal article" date="1996" name="FEBS Lett.">
        <title>Cloning of rat GADD45 gene and induction analysis following ionizing radiation in vivo.</title>
        <authorList>
            <person name="Yoshida T."/>
            <person name="Okazaki T."/>
            <person name="Hughes P.E."/>
            <person name="Schneider E.L."/>
            <person name="Mori N."/>
        </authorList>
    </citation>
    <scope>NUCLEOTIDE SEQUENCE [GENOMIC DNA]</scope>
</reference>
<accession>P48317</accession>
<gene>
    <name type="primary">Gadd45a</name>
    <name type="synonym">Ddit1</name>
    <name type="synonym">Gadd45</name>
</gene>
<sequence length="165" mass="18480">MTLEEFSAAEQKIERMDTVGDALEEVLSKARSQRTITVGVYEAAKLLNVDPDNVVLCLLAADEDDDRDVALQIHFTLIRAFCCENDINILRVSNPGRLAELLLLENDKSPAESGGLAQTPDLHCVLVTNPHSSQWKDPALSQLICFCRESRYMDQWVPVINLPER</sequence>
<feature type="chain" id="PRO_0000148333" description="Growth arrest and DNA damage-inducible protein GADD45 alpha">
    <location>
        <begin position="1"/>
        <end position="165"/>
    </location>
</feature>
<feature type="modified residue" description="Phosphothreonine" evidence="2">
    <location>
        <position position="2"/>
    </location>
</feature>
<keyword id="KW-0131">Cell cycle</keyword>
<keyword id="KW-0227">DNA damage</keyword>
<keyword id="KW-0338">Growth arrest</keyword>
<keyword id="KW-0539">Nucleus</keyword>
<keyword id="KW-0597">Phosphoprotein</keyword>
<keyword id="KW-1185">Reference proteome</keyword>
<evidence type="ECO:0000250" key="1"/>
<evidence type="ECO:0000250" key="2">
    <source>
        <dbReference type="UniProtKB" id="P24522"/>
    </source>
</evidence>
<evidence type="ECO:0000305" key="3"/>
<protein>
    <recommendedName>
        <fullName>Growth arrest and DNA damage-inducible protein GADD45 alpha</fullName>
    </recommendedName>
    <alternativeName>
        <fullName>DNA damage-inducible transcript 1 protein</fullName>
        <shortName>DDIT-1</shortName>
    </alternativeName>
</protein>